<protein>
    <recommendedName>
        <fullName>Pyruvate synthase subunit PorA</fullName>
        <ecNumber>1.2.7.1</ecNumber>
    </recommendedName>
    <alternativeName>
        <fullName>Pyruvate oxidoreductase alpha chain</fullName>
        <shortName>POR</shortName>
    </alternativeName>
    <alternativeName>
        <fullName>Pyruvic-ferredoxin oxidoreductase subunit alpha</fullName>
    </alternativeName>
</protein>
<evidence type="ECO:0000250" key="1"/>
<evidence type="ECO:0000305" key="2"/>
<dbReference type="EC" id="1.2.7.1"/>
<dbReference type="EMBL" id="BA000001">
    <property type="protein sequence ID" value="BAA29775.1"/>
    <property type="status" value="ALT_INIT"/>
    <property type="molecule type" value="Genomic_DNA"/>
</dbReference>
<dbReference type="PIR" id="E71114">
    <property type="entry name" value="E71114"/>
</dbReference>
<dbReference type="RefSeq" id="WP_048053192.1">
    <property type="nucleotide sequence ID" value="NC_000961.1"/>
</dbReference>
<dbReference type="SMR" id="O73986"/>
<dbReference type="STRING" id="70601.gene:9377629"/>
<dbReference type="EnsemblBacteria" id="BAA29775">
    <property type="protein sequence ID" value="BAA29775"/>
    <property type="gene ID" value="BAA29775"/>
</dbReference>
<dbReference type="GeneID" id="1443011"/>
<dbReference type="KEGG" id="pho:PH0684"/>
<dbReference type="eggNOG" id="arCOG01608">
    <property type="taxonomic scope" value="Archaea"/>
</dbReference>
<dbReference type="OrthoDB" id="372068at2157"/>
<dbReference type="Proteomes" id="UP000000752">
    <property type="component" value="Chromosome"/>
</dbReference>
<dbReference type="GO" id="GO:0019164">
    <property type="term" value="F:pyruvate synthase activity"/>
    <property type="evidence" value="ECO:0007669"/>
    <property type="project" value="UniProtKB-EC"/>
</dbReference>
<dbReference type="GO" id="GO:0006979">
    <property type="term" value="P:response to oxidative stress"/>
    <property type="evidence" value="ECO:0007669"/>
    <property type="project" value="TreeGrafter"/>
</dbReference>
<dbReference type="CDD" id="cd07034">
    <property type="entry name" value="TPP_PYR_PFOR_IOR-alpha_like"/>
    <property type="match status" value="1"/>
</dbReference>
<dbReference type="FunFam" id="3.40.50.920:FF:000010">
    <property type="entry name" value="Pyruvate ferredoxin oxidoreductase, alpha subunit"/>
    <property type="match status" value="1"/>
</dbReference>
<dbReference type="FunFam" id="3.40.50.970:FF:000012">
    <property type="entry name" value="Pyruvate:ferredoxin (Flavodoxin) oxidoreductase"/>
    <property type="match status" value="1"/>
</dbReference>
<dbReference type="Gene3D" id="3.40.50.920">
    <property type="match status" value="1"/>
</dbReference>
<dbReference type="Gene3D" id="3.40.50.970">
    <property type="match status" value="1"/>
</dbReference>
<dbReference type="InterPro" id="IPR033412">
    <property type="entry name" value="PFOR_II"/>
</dbReference>
<dbReference type="InterPro" id="IPR050722">
    <property type="entry name" value="Pyruvate:ferred/Flavod_OxRd"/>
</dbReference>
<dbReference type="InterPro" id="IPR053390">
    <property type="entry name" value="Pyruvate_synthase_PorA"/>
</dbReference>
<dbReference type="InterPro" id="IPR002880">
    <property type="entry name" value="Pyrv_Fd/Flavodoxin_OxRdtase_N"/>
</dbReference>
<dbReference type="InterPro" id="IPR029061">
    <property type="entry name" value="THDP-binding"/>
</dbReference>
<dbReference type="InterPro" id="IPR009014">
    <property type="entry name" value="Transketo_C/PFOR_II"/>
</dbReference>
<dbReference type="NCBIfam" id="NF040682">
    <property type="entry name" value="PorA_Arch"/>
    <property type="match status" value="1"/>
</dbReference>
<dbReference type="NCBIfam" id="NF006233">
    <property type="entry name" value="PRK08367.1"/>
    <property type="match status" value="1"/>
</dbReference>
<dbReference type="PANTHER" id="PTHR32154">
    <property type="entry name" value="PYRUVATE-FLAVODOXIN OXIDOREDUCTASE-RELATED"/>
    <property type="match status" value="1"/>
</dbReference>
<dbReference type="PANTHER" id="PTHR32154:SF0">
    <property type="entry name" value="PYRUVATE-FLAVODOXIN OXIDOREDUCTASE-RELATED"/>
    <property type="match status" value="1"/>
</dbReference>
<dbReference type="Pfam" id="PF17147">
    <property type="entry name" value="PFOR_II"/>
    <property type="match status" value="1"/>
</dbReference>
<dbReference type="Pfam" id="PF01855">
    <property type="entry name" value="POR_N"/>
    <property type="match status" value="1"/>
</dbReference>
<dbReference type="SUPFAM" id="SSF52518">
    <property type="entry name" value="Thiamin diphosphate-binding fold (THDP-binding)"/>
    <property type="match status" value="1"/>
</dbReference>
<dbReference type="SUPFAM" id="SSF52922">
    <property type="entry name" value="TK C-terminal domain-like"/>
    <property type="match status" value="1"/>
</dbReference>
<gene>
    <name type="primary">porA</name>
    <name type="ordered locus">PH0684</name>
</gene>
<name>PORA_PYRHO</name>
<reference key="1">
    <citation type="journal article" date="1998" name="DNA Res.">
        <title>Complete sequence and gene organization of the genome of a hyper-thermophilic archaebacterium, Pyrococcus horikoshii OT3.</title>
        <authorList>
            <person name="Kawarabayasi Y."/>
            <person name="Sawada M."/>
            <person name="Horikawa H."/>
            <person name="Haikawa Y."/>
            <person name="Hino Y."/>
            <person name="Yamamoto S."/>
            <person name="Sekine M."/>
            <person name="Baba S."/>
            <person name="Kosugi H."/>
            <person name="Hosoyama A."/>
            <person name="Nagai Y."/>
            <person name="Sakai M."/>
            <person name="Ogura K."/>
            <person name="Otsuka R."/>
            <person name="Nakazawa H."/>
            <person name="Takamiya M."/>
            <person name="Ohfuku Y."/>
            <person name="Funahashi T."/>
            <person name="Tanaka T."/>
            <person name="Kudoh Y."/>
            <person name="Yamazaki J."/>
            <person name="Kushida N."/>
            <person name="Oguchi A."/>
            <person name="Aoki K."/>
            <person name="Yoshizawa T."/>
            <person name="Nakamura Y."/>
            <person name="Robb F.T."/>
            <person name="Horikoshi K."/>
            <person name="Masuchi Y."/>
            <person name="Shizuya H."/>
            <person name="Kikuchi H."/>
        </authorList>
    </citation>
    <scope>NUCLEOTIDE SEQUENCE [LARGE SCALE GENOMIC DNA]</scope>
    <source>
        <strain>ATCC 700860 / DSM 12428 / JCM 9974 / NBRC 100139 / OT-3</strain>
    </source>
</reference>
<proteinExistence type="inferred from homology"/>
<sequence>MPIRTVMKANEAAAWAAKLAKPKVIAAFPITPSTLVPEKISEFVANGELDAEFIKVESEHSAISAVVGASAAGVRTFTATASQGLALMHEVLFIAAGMRLPIVMAIGNRSLSAPINIWNDWQDSISQRDTGWIQFYAENNQEALDLILLAYKVAEDERVLLPAMVGFDAFILTHTVEPVEIPDQEVVDEFLGEYEPKHAYLDPKRPITQGTLAFPAHYMEAKYLVWDAMEKARKVIDEAFAEFEKRFGRKYQKIEEYKTDDAEIIFVTMGSLAGTLKDWVDKKREEGYKVGAAKMTVYRPFPVEEIRALAKKAKVLGFIEKDISIGLYGAVFIDASAALVNESERPLMLDFIAGLGGRDVTFGQLDDALRIAEEALEKGEVEKPIHWIGLRKELL</sequence>
<comment type="catalytic activity">
    <reaction>
        <text>2 oxidized [2Fe-2S]-[ferredoxin] + pyruvate + CoA = 2 reduced [2Fe-2S]-[ferredoxin] + acetyl-CoA + CO2 + H(+)</text>
        <dbReference type="Rhea" id="RHEA:12765"/>
        <dbReference type="Rhea" id="RHEA-COMP:10000"/>
        <dbReference type="Rhea" id="RHEA-COMP:10001"/>
        <dbReference type="ChEBI" id="CHEBI:15361"/>
        <dbReference type="ChEBI" id="CHEBI:15378"/>
        <dbReference type="ChEBI" id="CHEBI:16526"/>
        <dbReference type="ChEBI" id="CHEBI:33737"/>
        <dbReference type="ChEBI" id="CHEBI:33738"/>
        <dbReference type="ChEBI" id="CHEBI:57287"/>
        <dbReference type="ChEBI" id="CHEBI:57288"/>
        <dbReference type="EC" id="1.2.7.1"/>
    </reaction>
</comment>
<comment type="subunit">
    <text evidence="1">Heterotetramer of one alpha, one beta, one delta and one gamma chain.</text>
</comment>
<comment type="sequence caution" evidence="2">
    <conflict type="erroneous initiation">
        <sequence resource="EMBL-CDS" id="BAA29775"/>
    </conflict>
</comment>
<keyword id="KW-0560">Oxidoreductase</keyword>
<feature type="chain" id="PRO_0000099901" description="Pyruvate synthase subunit PorA">
    <location>
        <begin position="1"/>
        <end position="395"/>
    </location>
</feature>
<accession>O73986</accession>
<accession>O58416</accession>
<organism>
    <name type="scientific">Pyrococcus horikoshii (strain ATCC 700860 / DSM 12428 / JCM 9974 / NBRC 100139 / OT-3)</name>
    <dbReference type="NCBI Taxonomy" id="70601"/>
    <lineage>
        <taxon>Archaea</taxon>
        <taxon>Methanobacteriati</taxon>
        <taxon>Methanobacteriota</taxon>
        <taxon>Thermococci</taxon>
        <taxon>Thermococcales</taxon>
        <taxon>Thermococcaceae</taxon>
        <taxon>Pyrococcus</taxon>
    </lineage>
</organism>